<reference key="1">
    <citation type="journal article" date="1995" name="Microbiology">
        <title>Determination of a 21548 bp nucleotide sequence around the 24 degrees region of the Bacillus subtilis chromosome.</title>
        <authorList>
            <person name="Ogawa K."/>
            <person name="Akagawa E."/>
            <person name="Nakamura K."/>
            <person name="Yamane K."/>
        </authorList>
    </citation>
    <scope>NUCLEOTIDE SEQUENCE [GENOMIC DNA]</scope>
    <source>
        <strain>168</strain>
    </source>
</reference>
<reference key="2">
    <citation type="journal article" date="1997" name="Nature">
        <title>The complete genome sequence of the Gram-positive bacterium Bacillus subtilis.</title>
        <authorList>
            <person name="Kunst F."/>
            <person name="Ogasawara N."/>
            <person name="Moszer I."/>
            <person name="Albertini A.M."/>
            <person name="Alloni G."/>
            <person name="Azevedo V."/>
            <person name="Bertero M.G."/>
            <person name="Bessieres P."/>
            <person name="Bolotin A."/>
            <person name="Borchert S."/>
            <person name="Borriss R."/>
            <person name="Boursier L."/>
            <person name="Brans A."/>
            <person name="Braun M."/>
            <person name="Brignell S.C."/>
            <person name="Bron S."/>
            <person name="Brouillet S."/>
            <person name="Bruschi C.V."/>
            <person name="Caldwell B."/>
            <person name="Capuano V."/>
            <person name="Carter N.M."/>
            <person name="Choi S.-K."/>
            <person name="Codani J.-J."/>
            <person name="Connerton I.F."/>
            <person name="Cummings N.J."/>
            <person name="Daniel R.A."/>
            <person name="Denizot F."/>
            <person name="Devine K.M."/>
            <person name="Duesterhoeft A."/>
            <person name="Ehrlich S.D."/>
            <person name="Emmerson P.T."/>
            <person name="Entian K.-D."/>
            <person name="Errington J."/>
            <person name="Fabret C."/>
            <person name="Ferrari E."/>
            <person name="Foulger D."/>
            <person name="Fritz C."/>
            <person name="Fujita M."/>
            <person name="Fujita Y."/>
            <person name="Fuma S."/>
            <person name="Galizzi A."/>
            <person name="Galleron N."/>
            <person name="Ghim S.-Y."/>
            <person name="Glaser P."/>
            <person name="Goffeau A."/>
            <person name="Golightly E.J."/>
            <person name="Grandi G."/>
            <person name="Guiseppi G."/>
            <person name="Guy B.J."/>
            <person name="Haga K."/>
            <person name="Haiech J."/>
            <person name="Harwood C.R."/>
            <person name="Henaut A."/>
            <person name="Hilbert H."/>
            <person name="Holsappel S."/>
            <person name="Hosono S."/>
            <person name="Hullo M.-F."/>
            <person name="Itaya M."/>
            <person name="Jones L.-M."/>
            <person name="Joris B."/>
            <person name="Karamata D."/>
            <person name="Kasahara Y."/>
            <person name="Klaerr-Blanchard M."/>
            <person name="Klein C."/>
            <person name="Kobayashi Y."/>
            <person name="Koetter P."/>
            <person name="Koningstein G."/>
            <person name="Krogh S."/>
            <person name="Kumano M."/>
            <person name="Kurita K."/>
            <person name="Lapidus A."/>
            <person name="Lardinois S."/>
            <person name="Lauber J."/>
            <person name="Lazarevic V."/>
            <person name="Lee S.-M."/>
            <person name="Levine A."/>
            <person name="Liu H."/>
            <person name="Masuda S."/>
            <person name="Mauel C."/>
            <person name="Medigue C."/>
            <person name="Medina N."/>
            <person name="Mellado R.P."/>
            <person name="Mizuno M."/>
            <person name="Moestl D."/>
            <person name="Nakai S."/>
            <person name="Noback M."/>
            <person name="Noone D."/>
            <person name="O'Reilly M."/>
            <person name="Ogawa K."/>
            <person name="Ogiwara A."/>
            <person name="Oudega B."/>
            <person name="Park S.-H."/>
            <person name="Parro V."/>
            <person name="Pohl T.M."/>
            <person name="Portetelle D."/>
            <person name="Porwollik S."/>
            <person name="Prescott A.M."/>
            <person name="Presecan E."/>
            <person name="Pujic P."/>
            <person name="Purnelle B."/>
            <person name="Rapoport G."/>
            <person name="Rey M."/>
            <person name="Reynolds S."/>
            <person name="Rieger M."/>
            <person name="Rivolta C."/>
            <person name="Rocha E."/>
            <person name="Roche B."/>
            <person name="Rose M."/>
            <person name="Sadaie Y."/>
            <person name="Sato T."/>
            <person name="Scanlan E."/>
            <person name="Schleich S."/>
            <person name="Schroeter R."/>
            <person name="Scoffone F."/>
            <person name="Sekiguchi J."/>
            <person name="Sekowska A."/>
            <person name="Seror S.J."/>
            <person name="Serror P."/>
            <person name="Shin B.-S."/>
            <person name="Soldo B."/>
            <person name="Sorokin A."/>
            <person name="Tacconi E."/>
            <person name="Takagi T."/>
            <person name="Takahashi H."/>
            <person name="Takemaru K."/>
            <person name="Takeuchi M."/>
            <person name="Tamakoshi A."/>
            <person name="Tanaka T."/>
            <person name="Terpstra P."/>
            <person name="Tognoni A."/>
            <person name="Tosato V."/>
            <person name="Uchiyama S."/>
            <person name="Vandenbol M."/>
            <person name="Vannier F."/>
            <person name="Vassarotti A."/>
            <person name="Viari A."/>
            <person name="Wambutt R."/>
            <person name="Wedler E."/>
            <person name="Wedler H."/>
            <person name="Weitzenegger T."/>
            <person name="Winters P."/>
            <person name="Wipat A."/>
            <person name="Yamamoto H."/>
            <person name="Yamane K."/>
            <person name="Yasumoto K."/>
            <person name="Yata K."/>
            <person name="Yoshida K."/>
            <person name="Yoshikawa H.-F."/>
            <person name="Zumstein E."/>
            <person name="Yoshikawa H."/>
            <person name="Danchin A."/>
        </authorList>
    </citation>
    <scope>NUCLEOTIDE SEQUENCE [LARGE SCALE GENOMIC DNA]</scope>
    <source>
        <strain>168</strain>
    </source>
</reference>
<reference key="3">
    <citation type="journal article" date="1999" name="Genome Res.">
        <title>Detecting and analyzing DNA sequencing errors: toward a higher quality of the Bacillus subtilis genome sequence.</title>
        <authorList>
            <person name="Medigue C."/>
            <person name="Rose M."/>
            <person name="Viari A."/>
            <person name="Danchin A."/>
        </authorList>
    </citation>
    <scope>SEQUENCE REVISION</scope>
</reference>
<reference key="4">
    <citation type="journal article" date="2009" name="Microbiology">
        <title>From a consortium sequence to a unified sequence: the Bacillus subtilis 168 reference genome a decade later.</title>
        <authorList>
            <person name="Barbe V."/>
            <person name="Cruveiller S."/>
            <person name="Kunst F."/>
            <person name="Lenoble P."/>
            <person name="Meurice G."/>
            <person name="Sekowska A."/>
            <person name="Vallenet D."/>
            <person name="Wang T."/>
            <person name="Moszer I."/>
            <person name="Medigue C."/>
            <person name="Danchin A."/>
        </authorList>
    </citation>
    <scope>SEQUENCE REVISION TO N-TERMINUS</scope>
</reference>
<gene>
    <name type="primary">ycbO</name>
    <name type="ordered locus">BSU02580</name>
</gene>
<organism>
    <name type="scientific">Bacillus subtilis (strain 168)</name>
    <dbReference type="NCBI Taxonomy" id="224308"/>
    <lineage>
        <taxon>Bacteria</taxon>
        <taxon>Bacillati</taxon>
        <taxon>Bacillota</taxon>
        <taxon>Bacilli</taxon>
        <taxon>Bacillales</taxon>
        <taxon>Bacillaceae</taxon>
        <taxon>Bacillus</taxon>
    </lineage>
</organism>
<dbReference type="EMBL" id="D30808">
    <property type="protein sequence ID" value="BAA06479.1"/>
    <property type="status" value="ALT_FRAME"/>
    <property type="molecule type" value="Genomic_DNA"/>
</dbReference>
<dbReference type="EMBL" id="AL009126">
    <property type="protein sequence ID" value="CAB12052.3"/>
    <property type="molecule type" value="Genomic_DNA"/>
</dbReference>
<dbReference type="PIR" id="A69754">
    <property type="entry name" value="A69754"/>
</dbReference>
<dbReference type="RefSeq" id="NP_388140.3">
    <property type="nucleotide sequence ID" value="NC_000964.3"/>
</dbReference>
<dbReference type="RefSeq" id="WP_010886395.1">
    <property type="nucleotide sequence ID" value="NZ_OZ025638.1"/>
</dbReference>
<dbReference type="FunCoup" id="P42247">
    <property type="interactions" value="31"/>
</dbReference>
<dbReference type="STRING" id="224308.BSU02580"/>
<dbReference type="PaxDb" id="224308-BSU02580"/>
<dbReference type="EnsemblBacteria" id="CAB12052">
    <property type="protein sequence ID" value="CAB12052"/>
    <property type="gene ID" value="BSU_02580"/>
</dbReference>
<dbReference type="GeneID" id="938401"/>
<dbReference type="KEGG" id="bsu:BSU02580"/>
<dbReference type="PATRIC" id="fig|224308.43.peg.264"/>
<dbReference type="eggNOG" id="ENOG502Z9TS">
    <property type="taxonomic scope" value="Bacteria"/>
</dbReference>
<dbReference type="InParanoid" id="P42247"/>
<dbReference type="OrthoDB" id="9784784at2"/>
<dbReference type="BioCyc" id="BSUB:BSU02580-MONOMER"/>
<dbReference type="Proteomes" id="UP000001570">
    <property type="component" value="Chromosome"/>
</dbReference>
<dbReference type="GO" id="GO:0005886">
    <property type="term" value="C:plasma membrane"/>
    <property type="evidence" value="ECO:0007669"/>
    <property type="project" value="UniProtKB-SubCell"/>
</dbReference>
<dbReference type="Pfam" id="PF12730">
    <property type="entry name" value="ABC2_membrane_4"/>
    <property type="match status" value="1"/>
</dbReference>
<sequence>MNLIRIELRKMKMGWYIRGALIANVIIMGFMWLISYSEKADGGVSFQSTDEAFLIIGTFVRAVFIVFGAVLIVKLVISEYKNKTILVMFTYPISRKKLLTAKLMIAGGLTFITILLSNILIAAGFFWLNSICHFIPGELTSEIISQQAVKMAVFAFGAAGTSLVPIFFGMRRHSVPATIISSVVIVMLISSTSPGFSISSVVYIPLSLAAFGLFFSYMAIRNADKQDA</sequence>
<protein>
    <recommendedName>
        <fullName>Uncharacterized protein YcbO</fullName>
    </recommendedName>
</protein>
<keyword id="KW-1003">Cell membrane</keyword>
<keyword id="KW-0472">Membrane</keyword>
<keyword id="KW-1185">Reference proteome</keyword>
<keyword id="KW-0812">Transmembrane</keyword>
<keyword id="KW-1133">Transmembrane helix</keyword>
<comment type="subcellular location">
    <subcellularLocation>
        <location evidence="2">Cell membrane</location>
        <topology evidence="2">Multi-pass membrane protein</topology>
    </subcellularLocation>
</comment>
<comment type="sequence caution" evidence="2">
    <conflict type="frameshift">
        <sequence resource="EMBL-CDS" id="BAA06479"/>
    </conflict>
</comment>
<evidence type="ECO:0000255" key="1"/>
<evidence type="ECO:0000305" key="2"/>
<proteinExistence type="predicted"/>
<name>YCBO_BACSU</name>
<feature type="chain" id="PRO_0000049468" description="Uncharacterized protein YcbO">
    <location>
        <begin position="1"/>
        <end position="228"/>
    </location>
</feature>
<feature type="transmembrane region" description="Helical" evidence="1">
    <location>
        <begin position="14"/>
        <end position="34"/>
    </location>
</feature>
<feature type="transmembrane region" description="Helical" evidence="1">
    <location>
        <begin position="53"/>
        <end position="73"/>
    </location>
</feature>
<feature type="transmembrane region" description="Helical" evidence="1">
    <location>
        <begin position="108"/>
        <end position="128"/>
    </location>
</feature>
<feature type="transmembrane region" description="Helical" evidence="1">
    <location>
        <begin position="148"/>
        <end position="168"/>
    </location>
</feature>
<feature type="transmembrane region" description="Helical" evidence="1">
    <location>
        <begin position="178"/>
        <end position="198"/>
    </location>
</feature>
<feature type="transmembrane region" description="Helical" evidence="1">
    <location>
        <begin position="200"/>
        <end position="220"/>
    </location>
</feature>
<accession>P42247</accession>